<protein>
    <recommendedName>
        <fullName>Probable protease SohB</fullName>
        <ecNumber>3.4.21.-</ecNumber>
    </recommendedName>
</protein>
<evidence type="ECO:0000250" key="1"/>
<evidence type="ECO:0000255" key="2"/>
<evidence type="ECO:0000256" key="3">
    <source>
        <dbReference type="SAM" id="MobiDB-lite"/>
    </source>
</evidence>
<evidence type="ECO:0000305" key="4"/>
<feature type="chain" id="PRO_0000171449" description="Probable protease SohB">
    <location>
        <begin position="1"/>
        <end position="353"/>
    </location>
</feature>
<feature type="transmembrane region" description="Helical" evidence="2">
    <location>
        <begin position="11"/>
        <end position="31"/>
    </location>
</feature>
<feature type="region of interest" description="Disordered" evidence="3">
    <location>
        <begin position="70"/>
        <end position="93"/>
    </location>
</feature>
<feature type="compositionally biased region" description="Basic and acidic residues" evidence="3">
    <location>
        <begin position="70"/>
        <end position="84"/>
    </location>
</feature>
<feature type="active site" description="Nucleophile" evidence="1">
    <location>
        <position position="181"/>
    </location>
</feature>
<feature type="active site" description="Proton donor/acceptor" evidence="1">
    <location>
        <position position="233"/>
    </location>
</feature>
<gene>
    <name type="primary">sohB</name>
    <name type="ordered locus">HI_1682</name>
</gene>
<reference key="1">
    <citation type="journal article" date="1995" name="Science">
        <title>Whole-genome random sequencing and assembly of Haemophilus influenzae Rd.</title>
        <authorList>
            <person name="Fleischmann R.D."/>
            <person name="Adams M.D."/>
            <person name="White O."/>
            <person name="Clayton R.A."/>
            <person name="Kirkness E.F."/>
            <person name="Kerlavage A.R."/>
            <person name="Bult C.J."/>
            <person name="Tomb J.-F."/>
            <person name="Dougherty B.A."/>
            <person name="Merrick J.M."/>
            <person name="McKenney K."/>
            <person name="Sutton G.G."/>
            <person name="FitzHugh W."/>
            <person name="Fields C.A."/>
            <person name="Gocayne J.D."/>
            <person name="Scott J.D."/>
            <person name="Shirley R."/>
            <person name="Liu L.-I."/>
            <person name="Glodek A."/>
            <person name="Kelley J.M."/>
            <person name="Weidman J.F."/>
            <person name="Phillips C.A."/>
            <person name="Spriggs T."/>
            <person name="Hedblom E."/>
            <person name="Cotton M.D."/>
            <person name="Utterback T.R."/>
            <person name="Hanna M.C."/>
            <person name="Nguyen D.T."/>
            <person name="Saudek D.M."/>
            <person name="Brandon R.C."/>
            <person name="Fine L.D."/>
            <person name="Fritchman J.L."/>
            <person name="Fuhrmann J.L."/>
            <person name="Geoghagen N.S.M."/>
            <person name="Gnehm C.L."/>
            <person name="McDonald L.A."/>
            <person name="Small K.V."/>
            <person name="Fraser C.M."/>
            <person name="Smith H.O."/>
            <person name="Venter J.C."/>
        </authorList>
    </citation>
    <scope>NUCLEOTIDE SEQUENCE [LARGE SCALE GENOMIC DNA]</scope>
    <source>
        <strain>ATCC 51907 / DSM 11121 / KW20 / Rd</strain>
    </source>
</reference>
<sequence>MLNDILTGYGIFILEILTILLLILAVVGLIISYRQHNKSKVGELEIKDLSEEFNEQVRLLRDFNLSEEEQKQRTKAEKKAEKQNAKKRKEKLKKGETLEDEKKACVYVLDFCGDISASETTALREEISAILNVAKSEDEVLLRLESPGGIVHNYGFAASQLSRLKQKGIKLTVAVDKVAASGGYMMACVADKIVSAPFAVIGSIGVVAQIPNVHRLLKKHDVDVDVMTAGEFKRTVTVLGENTEKGKQKFQQELEETHKLFKQFVSQNRPCLDIDKIATGEHWFGQQAIALQLVDEISTSDDLILEKMKEKQVLNVKYRLKKSLIKKFGRQAEESAINIIHRYSTKQSRDFMY</sequence>
<name>SOHB_HAEIN</name>
<proteinExistence type="inferred from homology"/>
<keyword id="KW-1003">Cell membrane</keyword>
<keyword id="KW-0378">Hydrolase</keyword>
<keyword id="KW-0472">Membrane</keyword>
<keyword id="KW-0645">Protease</keyword>
<keyword id="KW-1185">Reference proteome</keyword>
<keyword id="KW-0720">Serine protease</keyword>
<keyword id="KW-0812">Transmembrane</keyword>
<keyword id="KW-1133">Transmembrane helix</keyword>
<comment type="function">
    <text evidence="1">Possible protease.</text>
</comment>
<comment type="subcellular location">
    <subcellularLocation>
        <location evidence="4">Cell membrane</location>
        <topology evidence="4">Single-pass membrane protein</topology>
    </subcellularLocation>
</comment>
<comment type="similarity">
    <text evidence="4">Belongs to the peptidase S49 family.</text>
</comment>
<accession>P45315</accession>
<dbReference type="EC" id="3.4.21.-"/>
<dbReference type="EMBL" id="L42023">
    <property type="protein sequence ID" value="AAC23328.1"/>
    <property type="molecule type" value="Genomic_DNA"/>
</dbReference>
<dbReference type="PIR" id="D64136">
    <property type="entry name" value="D64136"/>
</dbReference>
<dbReference type="RefSeq" id="NP_439824.1">
    <property type="nucleotide sequence ID" value="NC_000907.1"/>
</dbReference>
<dbReference type="SMR" id="P45315"/>
<dbReference type="STRING" id="71421.HI_1682"/>
<dbReference type="EnsemblBacteria" id="AAC23328">
    <property type="protein sequence ID" value="AAC23328"/>
    <property type="gene ID" value="HI_1682"/>
</dbReference>
<dbReference type="KEGG" id="hin:HI_1682"/>
<dbReference type="PATRIC" id="fig|71421.8.peg.1761"/>
<dbReference type="eggNOG" id="COG0616">
    <property type="taxonomic scope" value="Bacteria"/>
</dbReference>
<dbReference type="HOGENOM" id="CLU_070316_0_0_6"/>
<dbReference type="OrthoDB" id="5614232at2"/>
<dbReference type="PhylomeDB" id="P45315"/>
<dbReference type="BioCyc" id="HINF71421:G1GJ1-1698-MONOMER"/>
<dbReference type="Proteomes" id="UP000000579">
    <property type="component" value="Chromosome"/>
</dbReference>
<dbReference type="GO" id="GO:0005886">
    <property type="term" value="C:plasma membrane"/>
    <property type="evidence" value="ECO:0007669"/>
    <property type="project" value="UniProtKB-SubCell"/>
</dbReference>
<dbReference type="GO" id="GO:0004252">
    <property type="term" value="F:serine-type endopeptidase activity"/>
    <property type="evidence" value="ECO:0007669"/>
    <property type="project" value="InterPro"/>
</dbReference>
<dbReference type="GO" id="GO:0006508">
    <property type="term" value="P:proteolysis"/>
    <property type="evidence" value="ECO:0007669"/>
    <property type="project" value="UniProtKB-KW"/>
</dbReference>
<dbReference type="CDD" id="cd07023">
    <property type="entry name" value="S49_Sppa_N_C"/>
    <property type="match status" value="1"/>
</dbReference>
<dbReference type="Gene3D" id="6.20.330.10">
    <property type="match status" value="1"/>
</dbReference>
<dbReference type="Gene3D" id="3.90.226.10">
    <property type="entry name" value="2-enoyl-CoA Hydratase, Chain A, domain 1"/>
    <property type="match status" value="1"/>
</dbReference>
<dbReference type="InterPro" id="IPR029045">
    <property type="entry name" value="ClpP/crotonase-like_dom_sf"/>
</dbReference>
<dbReference type="InterPro" id="IPR002142">
    <property type="entry name" value="Peptidase_S49"/>
</dbReference>
<dbReference type="InterPro" id="IPR013703">
    <property type="entry name" value="Peptidase_S49_N_proteobac"/>
</dbReference>
<dbReference type="InterPro" id="IPR047272">
    <property type="entry name" value="S49_SppA_C"/>
</dbReference>
<dbReference type="NCBIfam" id="NF008745">
    <property type="entry name" value="PRK11778.1"/>
    <property type="match status" value="1"/>
</dbReference>
<dbReference type="PANTHER" id="PTHR42987">
    <property type="entry name" value="PEPTIDASE S49"/>
    <property type="match status" value="1"/>
</dbReference>
<dbReference type="PANTHER" id="PTHR42987:SF4">
    <property type="entry name" value="PROTEASE SOHB-RELATED"/>
    <property type="match status" value="1"/>
</dbReference>
<dbReference type="Pfam" id="PF01343">
    <property type="entry name" value="Peptidase_S49"/>
    <property type="match status" value="1"/>
</dbReference>
<dbReference type="Pfam" id="PF08496">
    <property type="entry name" value="Peptidase_S49_N"/>
    <property type="match status" value="1"/>
</dbReference>
<dbReference type="SUPFAM" id="SSF52096">
    <property type="entry name" value="ClpP/crotonase"/>
    <property type="match status" value="1"/>
</dbReference>
<organism>
    <name type="scientific">Haemophilus influenzae (strain ATCC 51907 / DSM 11121 / KW20 / Rd)</name>
    <dbReference type="NCBI Taxonomy" id="71421"/>
    <lineage>
        <taxon>Bacteria</taxon>
        <taxon>Pseudomonadati</taxon>
        <taxon>Pseudomonadota</taxon>
        <taxon>Gammaproteobacteria</taxon>
        <taxon>Pasteurellales</taxon>
        <taxon>Pasteurellaceae</taxon>
        <taxon>Haemophilus</taxon>
    </lineage>
</organism>